<proteinExistence type="evidence at transcript level"/>
<organism>
    <name type="scientific">Xenopus laevis</name>
    <name type="common">African clawed frog</name>
    <dbReference type="NCBI Taxonomy" id="8355"/>
    <lineage>
        <taxon>Eukaryota</taxon>
        <taxon>Metazoa</taxon>
        <taxon>Chordata</taxon>
        <taxon>Craniata</taxon>
        <taxon>Vertebrata</taxon>
        <taxon>Euteleostomi</taxon>
        <taxon>Amphibia</taxon>
        <taxon>Batrachia</taxon>
        <taxon>Anura</taxon>
        <taxon>Pipoidea</taxon>
        <taxon>Pipidae</taxon>
        <taxon>Xenopodinae</taxon>
        <taxon>Xenopus</taxon>
        <taxon>Xenopus</taxon>
    </lineage>
</organism>
<accession>Q4V7X9</accession>
<protein>
    <recommendedName>
        <fullName evidence="4">E3 ubiquitin-protein ligase Hakai</fullName>
        <ecNumber evidence="2">2.3.2.27</ecNumber>
    </recommendedName>
    <alternativeName>
        <fullName evidence="2">Casitas B-lineage lymphoma-transforming sequence-like protein 1</fullName>
        <shortName evidence="2">c-Cbl-like protein 1</shortName>
    </alternativeName>
    <alternativeName>
        <fullName evidence="4">RING-type E3 ubiquitin transferase Hakai</fullName>
    </alternativeName>
</protein>
<evidence type="ECO:0000250" key="1">
    <source>
        <dbReference type="UniProtKB" id="Q75N03"/>
    </source>
</evidence>
<evidence type="ECO:0000250" key="2">
    <source>
        <dbReference type="UniProtKB" id="Q9JIY2"/>
    </source>
</evidence>
<evidence type="ECO:0000256" key="3">
    <source>
        <dbReference type="SAM" id="MobiDB-lite"/>
    </source>
</evidence>
<evidence type="ECO:0000305" key="4"/>
<feature type="chain" id="PRO_0000284052" description="E3 ubiquitin-protein ligase Hakai">
    <location>
        <begin position="1"/>
        <end position="496"/>
    </location>
</feature>
<feature type="zinc finger region" description="RING-type; degenerate">
    <location>
        <begin position="104"/>
        <end position="144"/>
    </location>
</feature>
<feature type="zinc finger region" description="C2H2-type">
    <location>
        <begin position="173"/>
        <end position="199"/>
    </location>
</feature>
<feature type="region of interest" description="Disordered" evidence="3">
    <location>
        <begin position="35"/>
        <end position="60"/>
    </location>
</feature>
<feature type="region of interest" description="HYB domain" evidence="2">
    <location>
        <begin position="157"/>
        <end position="215"/>
    </location>
</feature>
<feature type="region of interest" description="Disordered" evidence="3">
    <location>
        <begin position="304"/>
        <end position="496"/>
    </location>
</feature>
<feature type="compositionally biased region" description="Polar residues" evidence="3">
    <location>
        <begin position="304"/>
        <end position="314"/>
    </location>
</feature>
<feature type="compositionally biased region" description="Pro residues" evidence="3">
    <location>
        <begin position="350"/>
        <end position="360"/>
    </location>
</feature>
<feature type="compositionally biased region" description="Pro residues" evidence="3">
    <location>
        <begin position="380"/>
        <end position="397"/>
    </location>
</feature>
<feature type="compositionally biased region" description="Pro residues" evidence="3">
    <location>
        <begin position="407"/>
        <end position="430"/>
    </location>
</feature>
<feature type="compositionally biased region" description="Polar residues" evidence="3">
    <location>
        <begin position="434"/>
        <end position="449"/>
    </location>
</feature>
<feature type="compositionally biased region" description="Pro residues" evidence="3">
    <location>
        <begin position="464"/>
        <end position="483"/>
    </location>
</feature>
<comment type="function">
    <text evidence="1 2">E3 ubiquitin-protein ligase that mediates ubiquitination of several tyrosine-phosphorylated Src substrates. Associated component of the WMM complex, a complex that mediates N6-methyladenosine (m6A) methylation of RNAs, a modification that plays a role in the efficiency of mRNA splicing and RNA processing.</text>
</comment>
<comment type="catalytic activity">
    <reaction evidence="2">
        <text>S-ubiquitinyl-[E2 ubiquitin-conjugating enzyme]-L-cysteine + [acceptor protein]-L-lysine = [E2 ubiquitin-conjugating enzyme]-L-cysteine + N(6)-ubiquitinyl-[acceptor protein]-L-lysine.</text>
        <dbReference type="EC" id="2.3.2.27"/>
    </reaction>
</comment>
<comment type="pathway">
    <text evidence="2">Protein modification; protein ubiquitination.</text>
</comment>
<comment type="subunit">
    <text evidence="1 2">Homodimer (By similarity). Interacts with tyrosine-phosphorylated SRC substrates (By similarity). Component of the WMM complex, a N6-methyltransferase complex composed of a catalytic subcomplex, named MAC, and of an associated subcomplex, named MACOM. Component of the MACOM subcomplex (By similarity).</text>
</comment>
<comment type="subcellular location">
    <subcellularLocation>
        <location evidence="1">Nucleus speckle</location>
    </subcellularLocation>
    <subcellularLocation>
        <location evidence="1">Nucleus</location>
        <location evidence="1">Nucleoplasm</location>
    </subcellularLocation>
</comment>
<comment type="domain">
    <text evidence="2">The HYB domain forms a phosphotyrosine-binding pocket upon dimerization, and mediates as well the recognition of its flanking acidic amino acids.</text>
</comment>
<comment type="similarity">
    <text evidence="4">Belongs to the Hakai family.</text>
</comment>
<keyword id="KW-0217">Developmental protein</keyword>
<keyword id="KW-0479">Metal-binding</keyword>
<keyword id="KW-0539">Nucleus</keyword>
<keyword id="KW-1185">Reference proteome</keyword>
<keyword id="KW-0808">Transferase</keyword>
<keyword id="KW-0833">Ubl conjugation pathway</keyword>
<keyword id="KW-0862">Zinc</keyword>
<keyword id="KW-0863">Zinc-finger</keyword>
<dbReference type="EC" id="2.3.2.27" evidence="2"/>
<dbReference type="EMBL" id="BC097670">
    <property type="protein sequence ID" value="AAH97670.1"/>
    <property type="molecule type" value="mRNA"/>
</dbReference>
<dbReference type="RefSeq" id="NP_001089473.1">
    <property type="nucleotide sequence ID" value="NM_001096004.1"/>
</dbReference>
<dbReference type="SMR" id="Q4V7X9"/>
<dbReference type="DNASU" id="734524"/>
<dbReference type="GeneID" id="734524"/>
<dbReference type="KEGG" id="xla:734524"/>
<dbReference type="AGR" id="Xenbase:XB-GENE-17337556"/>
<dbReference type="CTD" id="734524"/>
<dbReference type="Xenbase" id="XB-GENE-17337556">
    <property type="gene designation" value="cbll1.S"/>
</dbReference>
<dbReference type="OrthoDB" id="547746at2759"/>
<dbReference type="UniPathway" id="UPA00143"/>
<dbReference type="Proteomes" id="UP000186698">
    <property type="component" value="Chromosome 3S"/>
</dbReference>
<dbReference type="Bgee" id="734524">
    <property type="expression patterns" value="Expressed in blastula and 19 other cell types or tissues"/>
</dbReference>
<dbReference type="GO" id="GO:0005737">
    <property type="term" value="C:cytoplasm"/>
    <property type="evidence" value="ECO:0000250"/>
    <property type="project" value="UniProtKB"/>
</dbReference>
<dbReference type="GO" id="GO:0016607">
    <property type="term" value="C:nuclear speck"/>
    <property type="evidence" value="ECO:0007669"/>
    <property type="project" value="UniProtKB-SubCell"/>
</dbReference>
<dbReference type="GO" id="GO:0005634">
    <property type="term" value="C:nucleus"/>
    <property type="evidence" value="ECO:0000250"/>
    <property type="project" value="UniProtKB"/>
</dbReference>
<dbReference type="GO" id="GO:0036396">
    <property type="term" value="C:RNA N6-methyladenosine methyltransferase complex"/>
    <property type="evidence" value="ECO:0000250"/>
    <property type="project" value="UniProtKB"/>
</dbReference>
<dbReference type="GO" id="GO:0061630">
    <property type="term" value="F:ubiquitin protein ligase activity"/>
    <property type="evidence" value="ECO:0000318"/>
    <property type="project" value="GO_Central"/>
</dbReference>
<dbReference type="GO" id="GO:0004842">
    <property type="term" value="F:ubiquitin-protein transferase activity"/>
    <property type="evidence" value="ECO:0000250"/>
    <property type="project" value="UniProtKB"/>
</dbReference>
<dbReference type="GO" id="GO:0008270">
    <property type="term" value="F:zinc ion binding"/>
    <property type="evidence" value="ECO:0007669"/>
    <property type="project" value="UniProtKB-KW"/>
</dbReference>
<dbReference type="GO" id="GO:0006397">
    <property type="term" value="P:mRNA processing"/>
    <property type="evidence" value="ECO:0000250"/>
    <property type="project" value="UniProtKB"/>
</dbReference>
<dbReference type="GO" id="GO:0007162">
    <property type="term" value="P:negative regulation of cell adhesion"/>
    <property type="evidence" value="ECO:0000250"/>
    <property type="project" value="UniProtKB"/>
</dbReference>
<dbReference type="GO" id="GO:0030335">
    <property type="term" value="P:positive regulation of cell migration"/>
    <property type="evidence" value="ECO:0000250"/>
    <property type="project" value="UniProtKB"/>
</dbReference>
<dbReference type="GO" id="GO:0045807">
    <property type="term" value="P:positive regulation of endocytosis"/>
    <property type="evidence" value="ECO:0000250"/>
    <property type="project" value="UniProtKB"/>
</dbReference>
<dbReference type="GO" id="GO:0016567">
    <property type="term" value="P:protein ubiquitination"/>
    <property type="evidence" value="ECO:0000318"/>
    <property type="project" value="GO_Central"/>
</dbReference>
<dbReference type="GO" id="GO:0030155">
    <property type="term" value="P:regulation of cell adhesion"/>
    <property type="evidence" value="ECO:0000318"/>
    <property type="project" value="GO_Central"/>
</dbReference>
<dbReference type="CDD" id="cd16508">
    <property type="entry name" value="RING-HC_HAKAI-like"/>
    <property type="match status" value="1"/>
</dbReference>
<dbReference type="FunFam" id="3.30.40.10:FF:000140">
    <property type="entry name" value="E3 ubiquitin-protein ligase Hakai isoform X2"/>
    <property type="match status" value="1"/>
</dbReference>
<dbReference type="FunFam" id="6.10.140.2210:FF:000001">
    <property type="entry name" value="Putative e3 ubiquitin-protein ligase hakai"/>
    <property type="match status" value="1"/>
</dbReference>
<dbReference type="Gene3D" id="6.10.140.2210">
    <property type="match status" value="1"/>
</dbReference>
<dbReference type="Gene3D" id="3.30.40.10">
    <property type="entry name" value="Zinc/RING finger domain, C3HC4 (zinc finger)"/>
    <property type="match status" value="1"/>
</dbReference>
<dbReference type="InterPro" id="IPR040380">
    <property type="entry name" value="HAKAI-like_RING-HC"/>
</dbReference>
<dbReference type="InterPro" id="IPR040383">
    <property type="entry name" value="HAKAI/CBLL2"/>
</dbReference>
<dbReference type="InterPro" id="IPR041042">
    <property type="entry name" value="Znf_Hakai"/>
</dbReference>
<dbReference type="InterPro" id="IPR013083">
    <property type="entry name" value="Znf_RING/FYVE/PHD"/>
</dbReference>
<dbReference type="InterPro" id="IPR017907">
    <property type="entry name" value="Znf_RING_CS"/>
</dbReference>
<dbReference type="PANTHER" id="PTHR13480:SF0">
    <property type="entry name" value="E3 UBIQUITIN-PROTEIN LIGASE HAKAI"/>
    <property type="match status" value="1"/>
</dbReference>
<dbReference type="PANTHER" id="PTHR13480">
    <property type="entry name" value="E3 UBIQUITIN-PROTEIN LIGASE HAKAI-RELATED"/>
    <property type="match status" value="1"/>
</dbReference>
<dbReference type="Pfam" id="PF18408">
    <property type="entry name" value="zf_Hakai"/>
    <property type="match status" value="1"/>
</dbReference>
<dbReference type="PROSITE" id="PS00518">
    <property type="entry name" value="ZF_RING_1"/>
    <property type="match status" value="1"/>
</dbReference>
<reference key="1">
    <citation type="submission" date="2005-06" db="EMBL/GenBank/DDBJ databases">
        <authorList>
            <consortium name="NIH - Xenopus Gene Collection (XGC) project"/>
        </authorList>
    </citation>
    <scope>NUCLEOTIDE SEQUENCE [LARGE SCALE MRNA]</scope>
    <source>
        <tissue>Oocyte</tissue>
    </source>
</reference>
<name>HAKAI_XENLA</name>
<gene>
    <name evidence="2" type="primary">cbll1</name>
    <name evidence="2" type="synonym">hakai</name>
</gene>
<sequence length="496" mass="55539">MDHNDNDLQGTNSMGSLSGLDVRRRIPIKLISKHPNKIKPAPRPQRNMNRIPTKPQPGFDYNEEERYENKGDVFNNQRRFSAHLFWDFKLNLIGEKEDTPVHFCDKCGLPIKIYGRMIPCKHVFCYDCALMHEKKADKLCPGTLVEDSTDTFKRMSCNDPVQRIEQCARGSLFMCSIVQGCKRTYLSQRDLQAHINHRHMRASKPTARPQPEPIHPPLAPPPAEIPDRFIMPPDKHHLSHMPPKQHILMPPPPMQHVPHEHFSQQHDDIRPSPADISLAPPPPRSVNQDAFRISTRQHSNLITVPIQDDSNSGARETPQAPGPTLHHPEYPGQPVVAHPHHIMPPQQHYAPPPPPPPPISHPMQHPPQAAGTPHMVYSQGPPPPMTTAPPPITPPPGHIIAQIPPYMNHPPPGPPPQHGGPPVNAPPPHHYNPSSMPQFNEDQGTLSPPFTQPGGMSPGMWPAPRGPPPRMQGPPSQAPMPGPHHPDQARYRPYYQ</sequence>